<dbReference type="EC" id="5.4.99.12" evidence="1"/>
<dbReference type="EMBL" id="AE014295">
    <property type="protein sequence ID" value="AAN25397.1"/>
    <property type="molecule type" value="Genomic_DNA"/>
</dbReference>
<dbReference type="RefSeq" id="NP_696761.1">
    <property type="nucleotide sequence ID" value="NC_004307.2"/>
</dbReference>
<dbReference type="RefSeq" id="WP_007053050.1">
    <property type="nucleotide sequence ID" value="NC_004307.2"/>
</dbReference>
<dbReference type="SMR" id="Q8CY46"/>
<dbReference type="STRING" id="206672.BL1608"/>
<dbReference type="EnsemblBacteria" id="AAN25397">
    <property type="protein sequence ID" value="AAN25397"/>
    <property type="gene ID" value="BL1608"/>
</dbReference>
<dbReference type="KEGG" id="blo:BL1608"/>
<dbReference type="PATRIC" id="fig|206672.9.peg.1663"/>
<dbReference type="HOGENOM" id="CLU_014673_0_2_11"/>
<dbReference type="OrthoDB" id="9811823at2"/>
<dbReference type="PhylomeDB" id="Q8CY46"/>
<dbReference type="Proteomes" id="UP000000439">
    <property type="component" value="Chromosome"/>
</dbReference>
<dbReference type="GO" id="GO:0003723">
    <property type="term" value="F:RNA binding"/>
    <property type="evidence" value="ECO:0007669"/>
    <property type="project" value="InterPro"/>
</dbReference>
<dbReference type="GO" id="GO:0160147">
    <property type="term" value="F:tRNA pseudouridine(38-40) synthase activity"/>
    <property type="evidence" value="ECO:0007669"/>
    <property type="project" value="UniProtKB-EC"/>
</dbReference>
<dbReference type="GO" id="GO:0031119">
    <property type="term" value="P:tRNA pseudouridine synthesis"/>
    <property type="evidence" value="ECO:0007669"/>
    <property type="project" value="UniProtKB-UniRule"/>
</dbReference>
<dbReference type="CDD" id="cd02570">
    <property type="entry name" value="PseudoU_synth_EcTruA"/>
    <property type="match status" value="1"/>
</dbReference>
<dbReference type="Gene3D" id="3.30.70.660">
    <property type="entry name" value="Pseudouridine synthase I, catalytic domain, C-terminal subdomain"/>
    <property type="match status" value="1"/>
</dbReference>
<dbReference type="Gene3D" id="3.30.70.580">
    <property type="entry name" value="Pseudouridine synthase I, catalytic domain, N-terminal subdomain"/>
    <property type="match status" value="1"/>
</dbReference>
<dbReference type="HAMAP" id="MF_00171">
    <property type="entry name" value="TruA"/>
    <property type="match status" value="1"/>
</dbReference>
<dbReference type="InterPro" id="IPR020103">
    <property type="entry name" value="PsdUridine_synth_cat_dom_sf"/>
</dbReference>
<dbReference type="InterPro" id="IPR001406">
    <property type="entry name" value="PsdUridine_synth_TruA"/>
</dbReference>
<dbReference type="InterPro" id="IPR020097">
    <property type="entry name" value="PsdUridine_synth_TruA_a/b_dom"/>
</dbReference>
<dbReference type="InterPro" id="IPR020095">
    <property type="entry name" value="PsdUridine_synth_TruA_C"/>
</dbReference>
<dbReference type="InterPro" id="IPR020094">
    <property type="entry name" value="TruA/RsuA/RluB/E/F_N"/>
</dbReference>
<dbReference type="NCBIfam" id="TIGR00071">
    <property type="entry name" value="hisT_truA"/>
    <property type="match status" value="1"/>
</dbReference>
<dbReference type="PANTHER" id="PTHR11142">
    <property type="entry name" value="PSEUDOURIDYLATE SYNTHASE"/>
    <property type="match status" value="1"/>
</dbReference>
<dbReference type="PANTHER" id="PTHR11142:SF0">
    <property type="entry name" value="TRNA PSEUDOURIDINE SYNTHASE-LIKE 1"/>
    <property type="match status" value="1"/>
</dbReference>
<dbReference type="Pfam" id="PF01416">
    <property type="entry name" value="PseudoU_synth_1"/>
    <property type="match status" value="1"/>
</dbReference>
<dbReference type="PIRSF" id="PIRSF001430">
    <property type="entry name" value="tRNA_psdUrid_synth"/>
    <property type="match status" value="1"/>
</dbReference>
<dbReference type="SUPFAM" id="SSF55120">
    <property type="entry name" value="Pseudouridine synthase"/>
    <property type="match status" value="1"/>
</dbReference>
<protein>
    <recommendedName>
        <fullName evidence="1">tRNA pseudouridine synthase A</fullName>
        <ecNumber evidence="1">5.4.99.12</ecNumber>
    </recommendedName>
    <alternativeName>
        <fullName evidence="1">tRNA pseudouridine(38-40) synthase</fullName>
    </alternativeName>
    <alternativeName>
        <fullName evidence="1">tRNA pseudouridylate synthase I</fullName>
    </alternativeName>
    <alternativeName>
        <fullName evidence="1">tRNA-uridine isomerase I</fullName>
    </alternativeName>
</protein>
<accession>Q8CY46</accession>
<gene>
    <name evidence="1" type="primary">truA</name>
    <name type="ordered locus">BL1608</name>
</gene>
<evidence type="ECO:0000255" key="1">
    <source>
        <dbReference type="HAMAP-Rule" id="MF_00171"/>
    </source>
</evidence>
<sequence length="303" mass="32930">MTRLRIDLAYDGGGFYGWAKQPNLRTVQGTIEDALHKVLRVPTDDAAEPLRLTVAGRTDTGVHASHQVAHLDVSDEVLNRCVGHMTIPVTEALTRRLKAVLPSDIVIHGIAVAPVGFDARFSALERTYVYRVADRSSEVDPRLRGCVLTVDEALDLELMNRAASLTIGLHDFGSFATPNPGGTTIREVKTAYWRRVPITPLVPDEMASHEAYRTPSLESGLVVFTIVADAFARNMVRSLVGSCIKVGSGRKSLEWFAGKMAEPVREGSSGPIAPQGLTLEHIAYPADDQLAARAEAIRAVRTL</sequence>
<feature type="chain" id="PRO_0000057339" description="tRNA pseudouridine synthase A">
    <location>
        <begin position="1"/>
        <end position="303"/>
    </location>
</feature>
<feature type="active site" description="Nucleophile" evidence="1">
    <location>
        <position position="59"/>
    </location>
</feature>
<feature type="binding site" evidence="1">
    <location>
        <position position="128"/>
    </location>
    <ligand>
        <name>substrate</name>
    </ligand>
</feature>
<name>TRUA_BIFLO</name>
<keyword id="KW-0413">Isomerase</keyword>
<keyword id="KW-1185">Reference proteome</keyword>
<keyword id="KW-0819">tRNA processing</keyword>
<comment type="function">
    <text evidence="1">Formation of pseudouridine at positions 38, 39 and 40 in the anticodon stem and loop of transfer RNAs.</text>
</comment>
<comment type="catalytic activity">
    <reaction evidence="1">
        <text>uridine(38/39/40) in tRNA = pseudouridine(38/39/40) in tRNA</text>
        <dbReference type="Rhea" id="RHEA:22376"/>
        <dbReference type="Rhea" id="RHEA-COMP:10085"/>
        <dbReference type="Rhea" id="RHEA-COMP:10087"/>
        <dbReference type="ChEBI" id="CHEBI:65314"/>
        <dbReference type="ChEBI" id="CHEBI:65315"/>
        <dbReference type="EC" id="5.4.99.12"/>
    </reaction>
</comment>
<comment type="subunit">
    <text evidence="1">Homodimer.</text>
</comment>
<comment type="similarity">
    <text evidence="1">Belongs to the tRNA pseudouridine synthase TruA family.</text>
</comment>
<organism>
    <name type="scientific">Bifidobacterium longum (strain NCC 2705)</name>
    <dbReference type="NCBI Taxonomy" id="206672"/>
    <lineage>
        <taxon>Bacteria</taxon>
        <taxon>Bacillati</taxon>
        <taxon>Actinomycetota</taxon>
        <taxon>Actinomycetes</taxon>
        <taxon>Bifidobacteriales</taxon>
        <taxon>Bifidobacteriaceae</taxon>
        <taxon>Bifidobacterium</taxon>
    </lineage>
</organism>
<reference key="1">
    <citation type="journal article" date="2002" name="Proc. Natl. Acad. Sci. U.S.A.">
        <title>The genome sequence of Bifidobacterium longum reflects its adaptation to the human gastrointestinal tract.</title>
        <authorList>
            <person name="Schell M.A."/>
            <person name="Karmirantzou M."/>
            <person name="Snel B."/>
            <person name="Vilanova D."/>
            <person name="Berger B."/>
            <person name="Pessi G."/>
            <person name="Zwahlen M.-C."/>
            <person name="Desiere F."/>
            <person name="Bork P."/>
            <person name="Delley M."/>
            <person name="Pridmore R.D."/>
            <person name="Arigoni F."/>
        </authorList>
    </citation>
    <scope>NUCLEOTIDE SEQUENCE [LARGE SCALE GENOMIC DNA]</scope>
    <source>
        <strain>NCC 2705</strain>
    </source>
</reference>
<proteinExistence type="inferred from homology"/>